<protein>
    <recommendedName>
        <fullName evidence="1">Holliday junction branch migration complex subunit RuvB</fullName>
        <ecNumber evidence="1">3.6.4.-</ecNumber>
    </recommendedName>
</protein>
<dbReference type="EC" id="3.6.4.-" evidence="1"/>
<dbReference type="EMBL" id="CP001129">
    <property type="protein sequence ID" value="ACG61422.1"/>
    <property type="molecule type" value="Genomic_DNA"/>
</dbReference>
<dbReference type="RefSeq" id="WP_012514715.1">
    <property type="nucleotide sequence ID" value="NC_011134.1"/>
</dbReference>
<dbReference type="SMR" id="B4U5F8"/>
<dbReference type="KEGG" id="sez:Sez_0037"/>
<dbReference type="HOGENOM" id="CLU_055599_1_0_9"/>
<dbReference type="Proteomes" id="UP000001873">
    <property type="component" value="Chromosome"/>
</dbReference>
<dbReference type="GO" id="GO:0005737">
    <property type="term" value="C:cytoplasm"/>
    <property type="evidence" value="ECO:0007669"/>
    <property type="project" value="UniProtKB-SubCell"/>
</dbReference>
<dbReference type="GO" id="GO:0048476">
    <property type="term" value="C:Holliday junction resolvase complex"/>
    <property type="evidence" value="ECO:0007669"/>
    <property type="project" value="UniProtKB-UniRule"/>
</dbReference>
<dbReference type="GO" id="GO:0005524">
    <property type="term" value="F:ATP binding"/>
    <property type="evidence" value="ECO:0007669"/>
    <property type="project" value="UniProtKB-UniRule"/>
</dbReference>
<dbReference type="GO" id="GO:0016887">
    <property type="term" value="F:ATP hydrolysis activity"/>
    <property type="evidence" value="ECO:0007669"/>
    <property type="project" value="InterPro"/>
</dbReference>
<dbReference type="GO" id="GO:0000400">
    <property type="term" value="F:four-way junction DNA binding"/>
    <property type="evidence" value="ECO:0007669"/>
    <property type="project" value="UniProtKB-UniRule"/>
</dbReference>
<dbReference type="GO" id="GO:0009378">
    <property type="term" value="F:four-way junction helicase activity"/>
    <property type="evidence" value="ECO:0007669"/>
    <property type="project" value="InterPro"/>
</dbReference>
<dbReference type="GO" id="GO:0006310">
    <property type="term" value="P:DNA recombination"/>
    <property type="evidence" value="ECO:0007669"/>
    <property type="project" value="UniProtKB-UniRule"/>
</dbReference>
<dbReference type="GO" id="GO:0006281">
    <property type="term" value="P:DNA repair"/>
    <property type="evidence" value="ECO:0007669"/>
    <property type="project" value="UniProtKB-UniRule"/>
</dbReference>
<dbReference type="CDD" id="cd00009">
    <property type="entry name" value="AAA"/>
    <property type="match status" value="1"/>
</dbReference>
<dbReference type="Gene3D" id="1.10.8.60">
    <property type="match status" value="1"/>
</dbReference>
<dbReference type="Gene3D" id="3.40.50.300">
    <property type="entry name" value="P-loop containing nucleotide triphosphate hydrolases"/>
    <property type="match status" value="1"/>
</dbReference>
<dbReference type="Gene3D" id="1.10.10.10">
    <property type="entry name" value="Winged helix-like DNA-binding domain superfamily/Winged helix DNA-binding domain"/>
    <property type="match status" value="1"/>
</dbReference>
<dbReference type="HAMAP" id="MF_00016">
    <property type="entry name" value="DNA_HJ_migration_RuvB"/>
    <property type="match status" value="1"/>
</dbReference>
<dbReference type="InterPro" id="IPR003593">
    <property type="entry name" value="AAA+_ATPase"/>
</dbReference>
<dbReference type="InterPro" id="IPR041445">
    <property type="entry name" value="AAA_lid_4"/>
</dbReference>
<dbReference type="InterPro" id="IPR004605">
    <property type="entry name" value="DNA_helicase_Holl-junc_RuvB"/>
</dbReference>
<dbReference type="InterPro" id="IPR027417">
    <property type="entry name" value="P-loop_NTPase"/>
</dbReference>
<dbReference type="InterPro" id="IPR008824">
    <property type="entry name" value="RuvB-like_N"/>
</dbReference>
<dbReference type="InterPro" id="IPR008823">
    <property type="entry name" value="RuvB_C"/>
</dbReference>
<dbReference type="InterPro" id="IPR036388">
    <property type="entry name" value="WH-like_DNA-bd_sf"/>
</dbReference>
<dbReference type="InterPro" id="IPR036390">
    <property type="entry name" value="WH_DNA-bd_sf"/>
</dbReference>
<dbReference type="NCBIfam" id="NF000868">
    <property type="entry name" value="PRK00080.1"/>
    <property type="match status" value="1"/>
</dbReference>
<dbReference type="NCBIfam" id="TIGR00635">
    <property type="entry name" value="ruvB"/>
    <property type="match status" value="1"/>
</dbReference>
<dbReference type="PANTHER" id="PTHR42848">
    <property type="match status" value="1"/>
</dbReference>
<dbReference type="PANTHER" id="PTHR42848:SF1">
    <property type="entry name" value="HOLLIDAY JUNCTION BRANCH MIGRATION COMPLEX SUBUNIT RUVB"/>
    <property type="match status" value="1"/>
</dbReference>
<dbReference type="Pfam" id="PF17864">
    <property type="entry name" value="AAA_lid_4"/>
    <property type="match status" value="1"/>
</dbReference>
<dbReference type="Pfam" id="PF05491">
    <property type="entry name" value="RuvB_C"/>
    <property type="match status" value="1"/>
</dbReference>
<dbReference type="Pfam" id="PF05496">
    <property type="entry name" value="RuvB_N"/>
    <property type="match status" value="1"/>
</dbReference>
<dbReference type="SMART" id="SM00382">
    <property type="entry name" value="AAA"/>
    <property type="match status" value="1"/>
</dbReference>
<dbReference type="SUPFAM" id="SSF52540">
    <property type="entry name" value="P-loop containing nucleoside triphosphate hydrolases"/>
    <property type="match status" value="1"/>
</dbReference>
<dbReference type="SUPFAM" id="SSF46785">
    <property type="entry name" value="Winged helix' DNA-binding domain"/>
    <property type="match status" value="1"/>
</dbReference>
<name>RUVB_STREM</name>
<sequence>MTRILDNDLIGDEGSVERTLRPQYLREYIGQDRVKDQLMIFIEAAKRREESLDHVLLFGPPGLGKTTMAFVIANELGVHLKQTSGPAIEKAGDLVAILNDLEPGDVLFIDEIHRMPMTVEEILYSAMEDFYIDIMIGAGDTSRSVHLELPPFTLIGATTRAGMLSNPLRARFGITGHMEYYQTADLTEIVERTADIFDMTIKHEAAYELARRSRGTPRIANRLLKRVRDYAQIMGDGMITTQITDKALTMLDVDQEGLDYVDQKILRTMIEVYQGGPVGLGTLSVNIAEERDTVEDMYEPYLIQKGFIMRTRTGRVVTEKAYQHLGYPYEKKH</sequence>
<feature type="chain" id="PRO_1000089679" description="Holliday junction branch migration complex subunit RuvB">
    <location>
        <begin position="1"/>
        <end position="333"/>
    </location>
</feature>
<feature type="region of interest" description="Large ATPase domain (RuvB-L)" evidence="1">
    <location>
        <begin position="1"/>
        <end position="181"/>
    </location>
</feature>
<feature type="region of interest" description="Small ATPAse domain (RuvB-S)" evidence="1">
    <location>
        <begin position="182"/>
        <end position="252"/>
    </location>
</feature>
<feature type="region of interest" description="Head domain (RuvB-H)" evidence="1">
    <location>
        <begin position="255"/>
        <end position="333"/>
    </location>
</feature>
<feature type="binding site" evidence="1">
    <location>
        <position position="20"/>
    </location>
    <ligand>
        <name>ATP</name>
        <dbReference type="ChEBI" id="CHEBI:30616"/>
    </ligand>
</feature>
<feature type="binding site" evidence="1">
    <location>
        <position position="21"/>
    </location>
    <ligand>
        <name>ATP</name>
        <dbReference type="ChEBI" id="CHEBI:30616"/>
    </ligand>
</feature>
<feature type="binding site" evidence="1">
    <location>
        <position position="62"/>
    </location>
    <ligand>
        <name>ATP</name>
        <dbReference type="ChEBI" id="CHEBI:30616"/>
    </ligand>
</feature>
<feature type="binding site" evidence="1">
    <location>
        <position position="65"/>
    </location>
    <ligand>
        <name>ATP</name>
        <dbReference type="ChEBI" id="CHEBI:30616"/>
    </ligand>
</feature>
<feature type="binding site" evidence="1">
    <location>
        <position position="66"/>
    </location>
    <ligand>
        <name>ATP</name>
        <dbReference type="ChEBI" id="CHEBI:30616"/>
    </ligand>
</feature>
<feature type="binding site" evidence="1">
    <location>
        <position position="66"/>
    </location>
    <ligand>
        <name>Mg(2+)</name>
        <dbReference type="ChEBI" id="CHEBI:18420"/>
    </ligand>
</feature>
<feature type="binding site" evidence="1">
    <location>
        <position position="67"/>
    </location>
    <ligand>
        <name>ATP</name>
        <dbReference type="ChEBI" id="CHEBI:30616"/>
    </ligand>
</feature>
<feature type="binding site" evidence="1">
    <location>
        <begin position="128"/>
        <end position="130"/>
    </location>
    <ligand>
        <name>ATP</name>
        <dbReference type="ChEBI" id="CHEBI:30616"/>
    </ligand>
</feature>
<feature type="binding site" evidence="1">
    <location>
        <position position="171"/>
    </location>
    <ligand>
        <name>ATP</name>
        <dbReference type="ChEBI" id="CHEBI:30616"/>
    </ligand>
</feature>
<feature type="binding site" evidence="1">
    <location>
        <position position="181"/>
    </location>
    <ligand>
        <name>ATP</name>
        <dbReference type="ChEBI" id="CHEBI:30616"/>
    </ligand>
</feature>
<feature type="binding site" evidence="1">
    <location>
        <position position="218"/>
    </location>
    <ligand>
        <name>ATP</name>
        <dbReference type="ChEBI" id="CHEBI:30616"/>
    </ligand>
</feature>
<feature type="binding site" evidence="1">
    <location>
        <position position="291"/>
    </location>
    <ligand>
        <name>DNA</name>
        <dbReference type="ChEBI" id="CHEBI:16991"/>
    </ligand>
</feature>
<feature type="binding site" evidence="1">
    <location>
        <position position="310"/>
    </location>
    <ligand>
        <name>DNA</name>
        <dbReference type="ChEBI" id="CHEBI:16991"/>
    </ligand>
</feature>
<feature type="binding site" evidence="1">
    <location>
        <position position="312"/>
    </location>
    <ligand>
        <name>DNA</name>
        <dbReference type="ChEBI" id="CHEBI:16991"/>
    </ligand>
</feature>
<feature type="binding site" evidence="1">
    <location>
        <position position="315"/>
    </location>
    <ligand>
        <name>DNA</name>
        <dbReference type="ChEBI" id="CHEBI:16991"/>
    </ligand>
</feature>
<gene>
    <name evidence="1" type="primary">ruvB</name>
    <name type="ordered locus">Sez_0037</name>
</gene>
<accession>B4U5F8</accession>
<proteinExistence type="inferred from homology"/>
<comment type="function">
    <text evidence="1">The RuvA-RuvB-RuvC complex processes Holliday junction (HJ) DNA during genetic recombination and DNA repair, while the RuvA-RuvB complex plays an important role in the rescue of blocked DNA replication forks via replication fork reversal (RFR). RuvA specifically binds to HJ cruciform DNA, conferring on it an open structure. The RuvB hexamer acts as an ATP-dependent pump, pulling dsDNA into and through the RuvAB complex. RuvB forms 2 homohexamers on either side of HJ DNA bound by 1 or 2 RuvA tetramers; 4 subunits per hexamer contact DNA at a time. Coordinated motions by a converter formed by DNA-disengaged RuvB subunits stimulates ATP hydrolysis and nucleotide exchange. Immobilization of the converter enables RuvB to convert the ATP-contained energy into a lever motion, pulling 2 nucleotides of DNA out of the RuvA tetramer per ATP hydrolyzed, thus driving DNA branch migration. The RuvB motors rotate together with the DNA substrate, which together with the progressing nucleotide cycle form the mechanistic basis for DNA recombination by continuous HJ branch migration. Branch migration allows RuvC to scan DNA until it finds its consensus sequence, where it cleaves and resolves cruciform DNA.</text>
</comment>
<comment type="catalytic activity">
    <reaction evidence="1">
        <text>ATP + H2O = ADP + phosphate + H(+)</text>
        <dbReference type="Rhea" id="RHEA:13065"/>
        <dbReference type="ChEBI" id="CHEBI:15377"/>
        <dbReference type="ChEBI" id="CHEBI:15378"/>
        <dbReference type="ChEBI" id="CHEBI:30616"/>
        <dbReference type="ChEBI" id="CHEBI:43474"/>
        <dbReference type="ChEBI" id="CHEBI:456216"/>
    </reaction>
</comment>
<comment type="subunit">
    <text evidence="1">Homohexamer. Forms an RuvA(8)-RuvB(12)-Holliday junction (HJ) complex. HJ DNA is sandwiched between 2 RuvA tetramers; dsDNA enters through RuvA and exits via RuvB. An RuvB hexamer assembles on each DNA strand where it exits the tetramer. Each RuvB hexamer is contacted by two RuvA subunits (via domain III) on 2 adjacent RuvB subunits; this complex drives branch migration. In the full resolvosome a probable DNA-RuvA(4)-RuvB(12)-RuvC(2) complex forms which resolves the HJ.</text>
</comment>
<comment type="subcellular location">
    <subcellularLocation>
        <location evidence="1">Cytoplasm</location>
    </subcellularLocation>
</comment>
<comment type="domain">
    <text evidence="1">Has 3 domains, the large (RuvB-L) and small ATPase (RuvB-S) domains and the C-terminal head (RuvB-H) domain. The head domain binds DNA, while the ATPase domains jointly bind ATP, ADP or are empty depending on the state of the subunit in the translocation cycle. During a single DNA translocation step the structure of each domain remains the same, but their relative positions change.</text>
</comment>
<comment type="similarity">
    <text evidence="1">Belongs to the RuvB family.</text>
</comment>
<evidence type="ECO:0000255" key="1">
    <source>
        <dbReference type="HAMAP-Rule" id="MF_00016"/>
    </source>
</evidence>
<keyword id="KW-0067">ATP-binding</keyword>
<keyword id="KW-0963">Cytoplasm</keyword>
<keyword id="KW-0227">DNA damage</keyword>
<keyword id="KW-0233">DNA recombination</keyword>
<keyword id="KW-0234">DNA repair</keyword>
<keyword id="KW-0238">DNA-binding</keyword>
<keyword id="KW-0378">Hydrolase</keyword>
<keyword id="KW-0547">Nucleotide-binding</keyword>
<organism>
    <name type="scientific">Streptococcus equi subsp. zooepidemicus (strain MGCS10565)</name>
    <dbReference type="NCBI Taxonomy" id="552526"/>
    <lineage>
        <taxon>Bacteria</taxon>
        <taxon>Bacillati</taxon>
        <taxon>Bacillota</taxon>
        <taxon>Bacilli</taxon>
        <taxon>Lactobacillales</taxon>
        <taxon>Streptococcaceae</taxon>
        <taxon>Streptococcus</taxon>
    </lineage>
</organism>
<reference key="1">
    <citation type="journal article" date="2008" name="PLoS ONE">
        <title>Genome sequence of a lancefield group C Streptococcus zooepidemicus strain causing epidemic nephritis: new information about an old disease.</title>
        <authorList>
            <person name="Beres S.B."/>
            <person name="Sesso R."/>
            <person name="Pinto S.W.L."/>
            <person name="Hoe N.P."/>
            <person name="Porcella S.F."/>
            <person name="Deleo F.R."/>
            <person name="Musser J.M."/>
        </authorList>
    </citation>
    <scope>NUCLEOTIDE SEQUENCE [LARGE SCALE GENOMIC DNA]</scope>
    <source>
        <strain>MGCS10565</strain>
    </source>
</reference>